<sequence length="122" mass="13156">MIQQETMLQVGDNTGAKKVLCVKVLGGSTRRYASVGDIIVASVKEASPGGVVKKGDLVKAVVVRTKKEIRRADGSYIAFSENAAVIIDDNNNPKGTRIFGPVARELREKNFMKIISLAPEVL</sequence>
<evidence type="ECO:0000255" key="1">
    <source>
        <dbReference type="HAMAP-Rule" id="MF_01367"/>
    </source>
</evidence>
<evidence type="ECO:0000305" key="2"/>
<accession>Q0AUJ0</accession>
<organism>
    <name type="scientific">Syntrophomonas wolfei subsp. wolfei (strain DSM 2245B / Goettingen)</name>
    <dbReference type="NCBI Taxonomy" id="335541"/>
    <lineage>
        <taxon>Bacteria</taxon>
        <taxon>Bacillati</taxon>
        <taxon>Bacillota</taxon>
        <taxon>Clostridia</taxon>
        <taxon>Eubacteriales</taxon>
        <taxon>Syntrophomonadaceae</taxon>
        <taxon>Syntrophomonas</taxon>
    </lineage>
</organism>
<protein>
    <recommendedName>
        <fullName evidence="1">Large ribosomal subunit protein uL14</fullName>
    </recommendedName>
    <alternativeName>
        <fullName evidence="2">50S ribosomal protein L14</fullName>
    </alternativeName>
</protein>
<feature type="chain" id="PRO_1000055740" description="Large ribosomal subunit protein uL14">
    <location>
        <begin position="1"/>
        <end position="122"/>
    </location>
</feature>
<name>RL14_SYNWW</name>
<comment type="function">
    <text evidence="1">Binds to 23S rRNA. Forms part of two intersubunit bridges in the 70S ribosome.</text>
</comment>
<comment type="subunit">
    <text evidence="1">Part of the 50S ribosomal subunit. Forms a cluster with proteins L3 and L19. In the 70S ribosome, L14 and L19 interact and together make contacts with the 16S rRNA in bridges B5 and B8.</text>
</comment>
<comment type="similarity">
    <text evidence="1">Belongs to the universal ribosomal protein uL14 family.</text>
</comment>
<keyword id="KW-1185">Reference proteome</keyword>
<keyword id="KW-0687">Ribonucleoprotein</keyword>
<keyword id="KW-0689">Ribosomal protein</keyword>
<keyword id="KW-0694">RNA-binding</keyword>
<keyword id="KW-0699">rRNA-binding</keyword>
<proteinExistence type="inferred from homology"/>
<reference key="1">
    <citation type="journal article" date="2010" name="Environ. Microbiol.">
        <title>The genome of Syntrophomonas wolfei: new insights into syntrophic metabolism and biohydrogen production.</title>
        <authorList>
            <person name="Sieber J.R."/>
            <person name="Sims D.R."/>
            <person name="Han C."/>
            <person name="Kim E."/>
            <person name="Lykidis A."/>
            <person name="Lapidus A.L."/>
            <person name="McDonnald E."/>
            <person name="Rohlin L."/>
            <person name="Culley D.E."/>
            <person name="Gunsalus R."/>
            <person name="McInerney M.J."/>
        </authorList>
    </citation>
    <scope>NUCLEOTIDE SEQUENCE [LARGE SCALE GENOMIC DNA]</scope>
    <source>
        <strain>DSM 2245B / Goettingen</strain>
    </source>
</reference>
<dbReference type="EMBL" id="CP000448">
    <property type="protein sequence ID" value="ABI69614.1"/>
    <property type="molecule type" value="Genomic_DNA"/>
</dbReference>
<dbReference type="RefSeq" id="WP_011641698.1">
    <property type="nucleotide sequence ID" value="NC_008346.1"/>
</dbReference>
<dbReference type="SMR" id="Q0AUJ0"/>
<dbReference type="STRING" id="335541.Swol_2323"/>
<dbReference type="KEGG" id="swo:Swol_2323"/>
<dbReference type="eggNOG" id="COG0093">
    <property type="taxonomic scope" value="Bacteria"/>
</dbReference>
<dbReference type="HOGENOM" id="CLU_095071_2_1_9"/>
<dbReference type="OrthoDB" id="9806379at2"/>
<dbReference type="Proteomes" id="UP000001968">
    <property type="component" value="Chromosome"/>
</dbReference>
<dbReference type="GO" id="GO:0022625">
    <property type="term" value="C:cytosolic large ribosomal subunit"/>
    <property type="evidence" value="ECO:0007669"/>
    <property type="project" value="TreeGrafter"/>
</dbReference>
<dbReference type="GO" id="GO:0070180">
    <property type="term" value="F:large ribosomal subunit rRNA binding"/>
    <property type="evidence" value="ECO:0007669"/>
    <property type="project" value="TreeGrafter"/>
</dbReference>
<dbReference type="GO" id="GO:0003735">
    <property type="term" value="F:structural constituent of ribosome"/>
    <property type="evidence" value="ECO:0007669"/>
    <property type="project" value="InterPro"/>
</dbReference>
<dbReference type="GO" id="GO:0006412">
    <property type="term" value="P:translation"/>
    <property type="evidence" value="ECO:0007669"/>
    <property type="project" value="UniProtKB-UniRule"/>
</dbReference>
<dbReference type="CDD" id="cd00337">
    <property type="entry name" value="Ribosomal_uL14"/>
    <property type="match status" value="1"/>
</dbReference>
<dbReference type="FunFam" id="2.40.150.20:FF:000001">
    <property type="entry name" value="50S ribosomal protein L14"/>
    <property type="match status" value="1"/>
</dbReference>
<dbReference type="Gene3D" id="2.40.150.20">
    <property type="entry name" value="Ribosomal protein L14"/>
    <property type="match status" value="1"/>
</dbReference>
<dbReference type="HAMAP" id="MF_01367">
    <property type="entry name" value="Ribosomal_uL14"/>
    <property type="match status" value="1"/>
</dbReference>
<dbReference type="InterPro" id="IPR000218">
    <property type="entry name" value="Ribosomal_uL14"/>
</dbReference>
<dbReference type="InterPro" id="IPR005745">
    <property type="entry name" value="Ribosomal_uL14_bac-type"/>
</dbReference>
<dbReference type="InterPro" id="IPR019972">
    <property type="entry name" value="Ribosomal_uL14_CS"/>
</dbReference>
<dbReference type="InterPro" id="IPR036853">
    <property type="entry name" value="Ribosomal_uL14_sf"/>
</dbReference>
<dbReference type="NCBIfam" id="TIGR01067">
    <property type="entry name" value="rplN_bact"/>
    <property type="match status" value="1"/>
</dbReference>
<dbReference type="PANTHER" id="PTHR11761">
    <property type="entry name" value="50S/60S RIBOSOMAL PROTEIN L14/L23"/>
    <property type="match status" value="1"/>
</dbReference>
<dbReference type="PANTHER" id="PTHR11761:SF3">
    <property type="entry name" value="LARGE RIBOSOMAL SUBUNIT PROTEIN UL14M"/>
    <property type="match status" value="1"/>
</dbReference>
<dbReference type="Pfam" id="PF00238">
    <property type="entry name" value="Ribosomal_L14"/>
    <property type="match status" value="1"/>
</dbReference>
<dbReference type="SMART" id="SM01374">
    <property type="entry name" value="Ribosomal_L14"/>
    <property type="match status" value="1"/>
</dbReference>
<dbReference type="SUPFAM" id="SSF50193">
    <property type="entry name" value="Ribosomal protein L14"/>
    <property type="match status" value="1"/>
</dbReference>
<dbReference type="PROSITE" id="PS00049">
    <property type="entry name" value="RIBOSOMAL_L14"/>
    <property type="match status" value="1"/>
</dbReference>
<gene>
    <name evidence="1" type="primary">rplN</name>
    <name type="ordered locus">Swol_2323</name>
</gene>